<name>PAR3L_HUMAN</name>
<reference key="1">
    <citation type="journal article" date="2001" name="Nat. Genet.">
        <title>A gene encoding a putative GTPase regulator is mutated in familial amyotrophic lateral sclerosis 2.</title>
        <authorList>
            <person name="Hadano S."/>
            <person name="Hand C.K."/>
            <person name="Osuga H."/>
            <person name="Yanagisawa Y."/>
            <person name="Otomo A."/>
            <person name="Devon R.S."/>
            <person name="Miyamoto N."/>
            <person name="Showguchi-Miyata J."/>
            <person name="Okada Y."/>
            <person name="Singaraja R."/>
            <person name="Figlewicz D.A."/>
            <person name="Kwiatkowski T."/>
            <person name="Hosler B.A."/>
            <person name="Sagie T."/>
            <person name="Skaug J."/>
            <person name="Nasir J."/>
            <person name="Brown R.H. Jr."/>
            <person name="Scherer S.W."/>
            <person name="Rouleau G.A."/>
            <person name="Hayden M.R."/>
            <person name="Ikeda J.-E."/>
        </authorList>
    </citation>
    <scope>NUCLEOTIDE SEQUENCE [MRNA] (ISOFORM 4)</scope>
</reference>
<reference key="2">
    <citation type="journal article" date="2002" name="Biochem. Biophys. Res. Commun.">
        <title>PAR3beta, a novel homologue of the cell polarity protein PAR3, localizes to tight junctions.</title>
        <authorList>
            <person name="Kohjima M."/>
            <person name="Noda Y."/>
            <person name="Takeya R."/>
            <person name="Saito N."/>
            <person name="Takeuchi K."/>
            <person name="Sumimoto H."/>
        </authorList>
    </citation>
    <scope>NUCLEOTIDE SEQUENCE [MRNA] (ISOFORMS 1 AND 5)</scope>
    <scope>VARIANT PRO-165</scope>
</reference>
<reference key="3">
    <citation type="journal article" date="2002" name="Gene">
        <title>Multiple splice variants of Par3 and of a novel related gene, Par3L, produce proteins with different binding properties.</title>
        <authorList>
            <person name="Gao L."/>
            <person name="Macara I.G."/>
            <person name="Joberty G."/>
        </authorList>
    </citation>
    <scope>NUCLEOTIDE SEQUENCE [MRNA] (ISOFORMS 1; 2 AND 3)</scope>
    <scope>CHARACTERIZATION</scope>
    <scope>INTERACTION WITH PARD6B</scope>
</reference>
<reference key="4">
    <citation type="journal article" date="2005" name="Nature">
        <title>Generation and annotation of the DNA sequences of human chromosomes 2 and 4.</title>
        <authorList>
            <person name="Hillier L.W."/>
            <person name="Graves T.A."/>
            <person name="Fulton R.S."/>
            <person name="Fulton L.A."/>
            <person name="Pepin K.H."/>
            <person name="Minx P."/>
            <person name="Wagner-McPherson C."/>
            <person name="Layman D."/>
            <person name="Wylie K."/>
            <person name="Sekhon M."/>
            <person name="Becker M.C."/>
            <person name="Fewell G.A."/>
            <person name="Delehaunty K.D."/>
            <person name="Miner T.L."/>
            <person name="Nash W.E."/>
            <person name="Kremitzki C."/>
            <person name="Oddy L."/>
            <person name="Du H."/>
            <person name="Sun H."/>
            <person name="Bradshaw-Cordum H."/>
            <person name="Ali J."/>
            <person name="Carter J."/>
            <person name="Cordes M."/>
            <person name="Harris A."/>
            <person name="Isak A."/>
            <person name="van Brunt A."/>
            <person name="Nguyen C."/>
            <person name="Du F."/>
            <person name="Courtney L."/>
            <person name="Kalicki J."/>
            <person name="Ozersky P."/>
            <person name="Abbott S."/>
            <person name="Armstrong J."/>
            <person name="Belter E.A."/>
            <person name="Caruso L."/>
            <person name="Cedroni M."/>
            <person name="Cotton M."/>
            <person name="Davidson T."/>
            <person name="Desai A."/>
            <person name="Elliott G."/>
            <person name="Erb T."/>
            <person name="Fronick C."/>
            <person name="Gaige T."/>
            <person name="Haakenson W."/>
            <person name="Haglund K."/>
            <person name="Holmes A."/>
            <person name="Harkins R."/>
            <person name="Kim K."/>
            <person name="Kruchowski S.S."/>
            <person name="Strong C.M."/>
            <person name="Grewal N."/>
            <person name="Goyea E."/>
            <person name="Hou S."/>
            <person name="Levy A."/>
            <person name="Martinka S."/>
            <person name="Mead K."/>
            <person name="McLellan M.D."/>
            <person name="Meyer R."/>
            <person name="Randall-Maher J."/>
            <person name="Tomlinson C."/>
            <person name="Dauphin-Kohlberg S."/>
            <person name="Kozlowicz-Reilly A."/>
            <person name="Shah N."/>
            <person name="Swearengen-Shahid S."/>
            <person name="Snider J."/>
            <person name="Strong J.T."/>
            <person name="Thompson J."/>
            <person name="Yoakum M."/>
            <person name="Leonard S."/>
            <person name="Pearman C."/>
            <person name="Trani L."/>
            <person name="Radionenko M."/>
            <person name="Waligorski J.E."/>
            <person name="Wang C."/>
            <person name="Rock S.M."/>
            <person name="Tin-Wollam A.-M."/>
            <person name="Maupin R."/>
            <person name="Latreille P."/>
            <person name="Wendl M.C."/>
            <person name="Yang S.-P."/>
            <person name="Pohl C."/>
            <person name="Wallis J.W."/>
            <person name="Spieth J."/>
            <person name="Bieri T.A."/>
            <person name="Berkowicz N."/>
            <person name="Nelson J.O."/>
            <person name="Osborne J."/>
            <person name="Ding L."/>
            <person name="Meyer R."/>
            <person name="Sabo A."/>
            <person name="Shotland Y."/>
            <person name="Sinha P."/>
            <person name="Wohldmann P.E."/>
            <person name="Cook L.L."/>
            <person name="Hickenbotham M.T."/>
            <person name="Eldred J."/>
            <person name="Williams D."/>
            <person name="Jones T.A."/>
            <person name="She X."/>
            <person name="Ciccarelli F.D."/>
            <person name="Izaurralde E."/>
            <person name="Taylor J."/>
            <person name="Schmutz J."/>
            <person name="Myers R.M."/>
            <person name="Cox D.R."/>
            <person name="Huang X."/>
            <person name="McPherson J.D."/>
            <person name="Mardis E.R."/>
            <person name="Clifton S.W."/>
            <person name="Warren W.C."/>
            <person name="Chinwalla A.T."/>
            <person name="Eddy S.R."/>
            <person name="Marra M.A."/>
            <person name="Ovcharenko I."/>
            <person name="Furey T.S."/>
            <person name="Miller W."/>
            <person name="Eichler E.E."/>
            <person name="Bork P."/>
            <person name="Suyama M."/>
            <person name="Torrents D."/>
            <person name="Waterston R.H."/>
            <person name="Wilson R.K."/>
        </authorList>
    </citation>
    <scope>NUCLEOTIDE SEQUENCE [LARGE SCALE GENOMIC DNA]</scope>
</reference>
<reference key="5">
    <citation type="journal article" date="2004" name="Nat. Genet.">
        <title>Complete sequencing and characterization of 21,243 full-length human cDNAs.</title>
        <authorList>
            <person name="Ota T."/>
            <person name="Suzuki Y."/>
            <person name="Nishikawa T."/>
            <person name="Otsuki T."/>
            <person name="Sugiyama T."/>
            <person name="Irie R."/>
            <person name="Wakamatsu A."/>
            <person name="Hayashi K."/>
            <person name="Sato H."/>
            <person name="Nagai K."/>
            <person name="Kimura K."/>
            <person name="Makita H."/>
            <person name="Sekine M."/>
            <person name="Obayashi M."/>
            <person name="Nishi T."/>
            <person name="Shibahara T."/>
            <person name="Tanaka T."/>
            <person name="Ishii S."/>
            <person name="Yamamoto J."/>
            <person name="Saito K."/>
            <person name="Kawai Y."/>
            <person name="Isono Y."/>
            <person name="Nakamura Y."/>
            <person name="Nagahari K."/>
            <person name="Murakami K."/>
            <person name="Yasuda T."/>
            <person name="Iwayanagi T."/>
            <person name="Wagatsuma M."/>
            <person name="Shiratori A."/>
            <person name="Sudo H."/>
            <person name="Hosoiri T."/>
            <person name="Kaku Y."/>
            <person name="Kodaira H."/>
            <person name="Kondo H."/>
            <person name="Sugawara M."/>
            <person name="Takahashi M."/>
            <person name="Kanda K."/>
            <person name="Yokoi T."/>
            <person name="Furuya T."/>
            <person name="Kikkawa E."/>
            <person name="Omura Y."/>
            <person name="Abe K."/>
            <person name="Kamihara K."/>
            <person name="Katsuta N."/>
            <person name="Sato K."/>
            <person name="Tanikawa M."/>
            <person name="Yamazaki M."/>
            <person name="Ninomiya K."/>
            <person name="Ishibashi T."/>
            <person name="Yamashita H."/>
            <person name="Murakawa K."/>
            <person name="Fujimori K."/>
            <person name="Tanai H."/>
            <person name="Kimata M."/>
            <person name="Watanabe M."/>
            <person name="Hiraoka S."/>
            <person name="Chiba Y."/>
            <person name="Ishida S."/>
            <person name="Ono Y."/>
            <person name="Takiguchi S."/>
            <person name="Watanabe S."/>
            <person name="Yosida M."/>
            <person name="Hotuta T."/>
            <person name="Kusano J."/>
            <person name="Kanehori K."/>
            <person name="Takahashi-Fujii A."/>
            <person name="Hara H."/>
            <person name="Tanase T.-O."/>
            <person name="Nomura Y."/>
            <person name="Togiya S."/>
            <person name="Komai F."/>
            <person name="Hara R."/>
            <person name="Takeuchi K."/>
            <person name="Arita M."/>
            <person name="Imose N."/>
            <person name="Musashino K."/>
            <person name="Yuuki H."/>
            <person name="Oshima A."/>
            <person name="Sasaki N."/>
            <person name="Aotsuka S."/>
            <person name="Yoshikawa Y."/>
            <person name="Matsunawa H."/>
            <person name="Ichihara T."/>
            <person name="Shiohata N."/>
            <person name="Sano S."/>
            <person name="Moriya S."/>
            <person name="Momiyama H."/>
            <person name="Satoh N."/>
            <person name="Takami S."/>
            <person name="Terashima Y."/>
            <person name="Suzuki O."/>
            <person name="Nakagawa S."/>
            <person name="Senoh A."/>
            <person name="Mizoguchi H."/>
            <person name="Goto Y."/>
            <person name="Shimizu F."/>
            <person name="Wakebe H."/>
            <person name="Hishigaki H."/>
            <person name="Watanabe T."/>
            <person name="Sugiyama A."/>
            <person name="Takemoto M."/>
            <person name="Kawakami B."/>
            <person name="Yamazaki M."/>
            <person name="Watanabe K."/>
            <person name="Kumagai A."/>
            <person name="Itakura S."/>
            <person name="Fukuzumi Y."/>
            <person name="Fujimori Y."/>
            <person name="Komiyama M."/>
            <person name="Tashiro H."/>
            <person name="Tanigami A."/>
            <person name="Fujiwara T."/>
            <person name="Ono T."/>
            <person name="Yamada K."/>
            <person name="Fujii Y."/>
            <person name="Ozaki K."/>
            <person name="Hirao M."/>
            <person name="Ohmori Y."/>
            <person name="Kawabata A."/>
            <person name="Hikiji T."/>
            <person name="Kobatake N."/>
            <person name="Inagaki H."/>
            <person name="Ikema Y."/>
            <person name="Okamoto S."/>
            <person name="Okitani R."/>
            <person name="Kawakami T."/>
            <person name="Noguchi S."/>
            <person name="Itoh T."/>
            <person name="Shigeta K."/>
            <person name="Senba T."/>
            <person name="Matsumura K."/>
            <person name="Nakajima Y."/>
            <person name="Mizuno T."/>
            <person name="Morinaga M."/>
            <person name="Sasaki M."/>
            <person name="Togashi T."/>
            <person name="Oyama M."/>
            <person name="Hata H."/>
            <person name="Watanabe M."/>
            <person name="Komatsu T."/>
            <person name="Mizushima-Sugano J."/>
            <person name="Satoh T."/>
            <person name="Shirai Y."/>
            <person name="Takahashi Y."/>
            <person name="Nakagawa K."/>
            <person name="Okumura K."/>
            <person name="Nagase T."/>
            <person name="Nomura N."/>
            <person name="Kikuchi H."/>
            <person name="Masuho Y."/>
            <person name="Yamashita R."/>
            <person name="Nakai K."/>
            <person name="Yada T."/>
            <person name="Nakamura Y."/>
            <person name="Ohara O."/>
            <person name="Isogai T."/>
            <person name="Sugano S."/>
        </authorList>
    </citation>
    <scope>NUCLEOTIDE SEQUENCE [LARGE SCALE MRNA] OF 1-901 (ISOFORM 1)</scope>
    <scope>VARIANTS PRO-165 AND LYS-192</scope>
    <source>
        <tissue>Gastric mucosa</tissue>
        <tissue>Neuron</tissue>
    </source>
</reference>
<reference key="6">
    <citation type="journal article" date="2006" name="Biochem. Biophys. Res. Commun.">
        <title>Two forms of human Inscuteable-related protein that links Par3 to the Pins homologues LGN and AGS3.</title>
        <authorList>
            <person name="Izaki T."/>
            <person name="Kamakura S."/>
            <person name="Kohjima M."/>
            <person name="Sumimoto H."/>
        </authorList>
    </citation>
    <scope>INTERACTION WITH INSC</scope>
</reference>
<reference key="7">
    <citation type="journal article" date="2011" name="Sci. Signal.">
        <title>System-wide temporal characterization of the proteome and phosphoproteome of human embryonic stem cell differentiation.</title>
        <authorList>
            <person name="Rigbolt K.T."/>
            <person name="Prokhorova T.A."/>
            <person name="Akimov V."/>
            <person name="Henningsen J."/>
            <person name="Johansen P.T."/>
            <person name="Kratchmarova I."/>
            <person name="Kassem M."/>
            <person name="Mann M."/>
            <person name="Olsen J.V."/>
            <person name="Blagoev B."/>
        </authorList>
    </citation>
    <scope>PHOSPHORYLATION [LARGE SCALE ANALYSIS] AT SER-746 AND SER-801</scope>
    <scope>IDENTIFICATION BY MASS SPECTROMETRY [LARGE SCALE ANALYSIS]</scope>
</reference>
<reference key="8">
    <citation type="journal article" date="2013" name="J. Proteome Res.">
        <title>Toward a comprehensive characterization of a human cancer cell phosphoproteome.</title>
        <authorList>
            <person name="Zhou H."/>
            <person name="Di Palma S."/>
            <person name="Preisinger C."/>
            <person name="Peng M."/>
            <person name="Polat A.N."/>
            <person name="Heck A.J."/>
            <person name="Mohammed S."/>
        </authorList>
    </citation>
    <scope>PHOSPHORYLATION [LARGE SCALE ANALYSIS] AT SER-352; SER-368 AND SER-746</scope>
    <scope>IDENTIFICATION BY MASS SPECTROMETRY [LARGE SCALE ANALYSIS]</scope>
    <source>
        <tissue>Cervix carcinoma</tissue>
        <tissue>Erythroleukemia</tissue>
    </source>
</reference>
<reference key="9">
    <citation type="journal article" date="2014" name="J. Proteomics">
        <title>An enzyme assisted RP-RPLC approach for in-depth analysis of human liver phosphoproteome.</title>
        <authorList>
            <person name="Bian Y."/>
            <person name="Song C."/>
            <person name="Cheng K."/>
            <person name="Dong M."/>
            <person name="Wang F."/>
            <person name="Huang J."/>
            <person name="Sun D."/>
            <person name="Wang L."/>
            <person name="Ye M."/>
            <person name="Zou H."/>
        </authorList>
    </citation>
    <scope>PHOSPHORYLATION [LARGE SCALE ANALYSIS] AT SER-100 AND SER-1184</scope>
    <scope>IDENTIFICATION BY MASS SPECTROMETRY [LARGE SCALE ANALYSIS]</scope>
    <source>
        <tissue>Liver</tissue>
    </source>
</reference>
<keyword id="KW-0025">Alternative splicing</keyword>
<keyword id="KW-0131">Cell cycle</keyword>
<keyword id="KW-0132">Cell division</keyword>
<keyword id="KW-0965">Cell junction</keyword>
<keyword id="KW-0472">Membrane</keyword>
<keyword id="KW-0597">Phosphoprotein</keyword>
<keyword id="KW-1267">Proteomics identification</keyword>
<keyword id="KW-1185">Reference proteome</keyword>
<keyword id="KW-0677">Repeat</keyword>
<keyword id="KW-0796">Tight junction</keyword>
<dbReference type="EMBL" id="AB053321">
    <property type="protein sequence ID" value="BAB69028.1"/>
    <property type="molecule type" value="mRNA"/>
</dbReference>
<dbReference type="EMBL" id="AB073472">
    <property type="protein sequence ID" value="BAC54035.1"/>
    <property type="molecule type" value="mRNA"/>
</dbReference>
<dbReference type="EMBL" id="AB092439">
    <property type="protein sequence ID" value="BAC54285.1"/>
    <property type="molecule type" value="mRNA"/>
</dbReference>
<dbReference type="EMBL" id="AF428250">
    <property type="protein sequence ID" value="AAL30664.1"/>
    <property type="molecule type" value="mRNA"/>
</dbReference>
<dbReference type="EMBL" id="AF428251">
    <property type="protein sequence ID" value="AAL30665.1"/>
    <property type="molecule type" value="mRNA"/>
</dbReference>
<dbReference type="EMBL" id="AF466152">
    <property type="protein sequence ID" value="AAL79827.1"/>
    <property type="molecule type" value="mRNA"/>
</dbReference>
<dbReference type="EMBL" id="AC007385">
    <property type="status" value="NOT_ANNOTATED_CDS"/>
    <property type="molecule type" value="Genomic_DNA"/>
</dbReference>
<dbReference type="EMBL" id="AC007465">
    <property type="status" value="NOT_ANNOTATED_CDS"/>
    <property type="molecule type" value="Genomic_DNA"/>
</dbReference>
<dbReference type="EMBL" id="AC007736">
    <property type="status" value="NOT_ANNOTATED_CDS"/>
    <property type="molecule type" value="Genomic_DNA"/>
</dbReference>
<dbReference type="EMBL" id="AC007746">
    <property type="status" value="NOT_ANNOTATED_CDS"/>
    <property type="molecule type" value="Genomic_DNA"/>
</dbReference>
<dbReference type="EMBL" id="AC008168">
    <property type="status" value="NOT_ANNOTATED_CDS"/>
    <property type="molecule type" value="Genomic_DNA"/>
</dbReference>
<dbReference type="EMBL" id="AC008171">
    <property type="status" value="NOT_ANNOTATED_CDS"/>
    <property type="molecule type" value="Genomic_DNA"/>
</dbReference>
<dbReference type="EMBL" id="AC009316">
    <property type="status" value="NOT_ANNOTATED_CDS"/>
    <property type="molecule type" value="Genomic_DNA"/>
</dbReference>
<dbReference type="EMBL" id="AC011750">
    <property type="status" value="NOT_ANNOTATED_CDS"/>
    <property type="molecule type" value="Genomic_DNA"/>
</dbReference>
<dbReference type="EMBL" id="AC016903">
    <property type="status" value="NOT_ANNOTATED_CDS"/>
    <property type="molecule type" value="Genomic_DNA"/>
</dbReference>
<dbReference type="EMBL" id="AC108468">
    <property type="status" value="NOT_ANNOTATED_CDS"/>
    <property type="molecule type" value="Genomic_DNA"/>
</dbReference>
<dbReference type="EMBL" id="AK056157">
    <property type="protein sequence ID" value="BAB71106.1"/>
    <property type="status" value="ALT_FRAME"/>
    <property type="molecule type" value="mRNA"/>
</dbReference>
<dbReference type="EMBL" id="AK057965">
    <property type="protein sequence ID" value="BAB71623.1"/>
    <property type="status" value="ALT_INIT"/>
    <property type="molecule type" value="mRNA"/>
</dbReference>
<dbReference type="CCDS" id="CCDS42804.1">
    <molecule id="Q8TEW8-5"/>
</dbReference>
<dbReference type="CCDS" id="CCDS42805.1">
    <molecule id="Q8TEW8-6"/>
</dbReference>
<dbReference type="CCDS" id="CCDS42806.1">
    <molecule id="Q8TEW8-2"/>
</dbReference>
<dbReference type="CCDS" id="CCDS77511.1">
    <molecule id="Q8TEW8-1"/>
</dbReference>
<dbReference type="RefSeq" id="NP_001289698.1">
    <molecule id="Q8TEW8-1"/>
    <property type="nucleotide sequence ID" value="NM_001302769.2"/>
</dbReference>
<dbReference type="RefSeq" id="NP_476518.4">
    <molecule id="Q8TEW8-6"/>
    <property type="nucleotide sequence ID" value="NM_057177.6"/>
</dbReference>
<dbReference type="RefSeq" id="NP_689739.4">
    <molecule id="Q8TEW8-2"/>
    <property type="nucleotide sequence ID" value="NM_152526.5"/>
</dbReference>
<dbReference type="RefSeq" id="NP_995585.2">
    <molecule id="Q8TEW8-5"/>
    <property type="nucleotide sequence ID" value="NM_205863.4"/>
</dbReference>
<dbReference type="SMR" id="Q8TEW8"/>
<dbReference type="BioGRID" id="125592">
    <property type="interactions" value="47"/>
</dbReference>
<dbReference type="CORUM" id="Q8TEW8"/>
<dbReference type="DIP" id="DIP-42276N"/>
<dbReference type="FunCoup" id="Q8TEW8">
    <property type="interactions" value="339"/>
</dbReference>
<dbReference type="IntAct" id="Q8TEW8">
    <property type="interactions" value="25"/>
</dbReference>
<dbReference type="MINT" id="Q8TEW8"/>
<dbReference type="STRING" id="9606.ENSP00000385848"/>
<dbReference type="GlyGen" id="Q8TEW8">
    <property type="glycosylation" value="2 sites"/>
</dbReference>
<dbReference type="iPTMnet" id="Q8TEW8"/>
<dbReference type="PhosphoSitePlus" id="Q8TEW8"/>
<dbReference type="BioMuta" id="PARD3B"/>
<dbReference type="DMDM" id="30913163"/>
<dbReference type="jPOST" id="Q8TEW8"/>
<dbReference type="MassIVE" id="Q8TEW8"/>
<dbReference type="PaxDb" id="9606-ENSP00000351618"/>
<dbReference type="PeptideAtlas" id="Q8TEW8"/>
<dbReference type="ProteomicsDB" id="19836"/>
<dbReference type="ProteomicsDB" id="74517">
    <molecule id="Q8TEW8-1"/>
</dbReference>
<dbReference type="ProteomicsDB" id="74518">
    <molecule id="Q8TEW8-2"/>
</dbReference>
<dbReference type="ProteomicsDB" id="74519">
    <molecule id="Q8TEW8-3"/>
</dbReference>
<dbReference type="ProteomicsDB" id="74520">
    <molecule id="Q8TEW8-4"/>
</dbReference>
<dbReference type="ProteomicsDB" id="74521">
    <molecule id="Q8TEW8-5"/>
</dbReference>
<dbReference type="Antibodypedia" id="34169">
    <property type="antibodies" value="40 antibodies from 17 providers"/>
</dbReference>
<dbReference type="DNASU" id="117583"/>
<dbReference type="Ensembl" id="ENST00000349953.7">
    <molecule id="Q8TEW8-5"/>
    <property type="protein sequence ID" value="ENSP00000340280.3"/>
    <property type="gene ID" value="ENSG00000116117.20"/>
</dbReference>
<dbReference type="Ensembl" id="ENST00000351153.5">
    <molecule id="Q8TEW8-6"/>
    <property type="protein sequence ID" value="ENSP00000317261.2"/>
    <property type="gene ID" value="ENSG00000116117.20"/>
</dbReference>
<dbReference type="Ensembl" id="ENST00000358768.6">
    <molecule id="Q8TEW8-2"/>
    <property type="protein sequence ID" value="ENSP00000351618.2"/>
    <property type="gene ID" value="ENSG00000116117.20"/>
</dbReference>
<dbReference type="Ensembl" id="ENST00000406610.7">
    <molecule id="Q8TEW8-1"/>
    <property type="protein sequence ID" value="ENSP00000385848.2"/>
    <property type="gene ID" value="ENSG00000116117.20"/>
</dbReference>
<dbReference type="Ensembl" id="ENST00000415947.1">
    <molecule id="Q8TEW8-4"/>
    <property type="protein sequence ID" value="ENSP00000407718.1"/>
    <property type="gene ID" value="ENSG00000116117.20"/>
</dbReference>
<dbReference type="GeneID" id="117583"/>
<dbReference type="KEGG" id="hsa:117583"/>
<dbReference type="MANE-Select" id="ENST00000406610.7">
    <property type="protein sequence ID" value="ENSP00000385848.2"/>
    <property type="RefSeq nucleotide sequence ID" value="NM_001302769.2"/>
    <property type="RefSeq protein sequence ID" value="NP_001289698.1"/>
</dbReference>
<dbReference type="UCSC" id="uc002vao.3">
    <molecule id="Q8TEW8-1"/>
    <property type="organism name" value="human"/>
</dbReference>
<dbReference type="AGR" id="HGNC:14446"/>
<dbReference type="CTD" id="117583"/>
<dbReference type="DisGeNET" id="117583"/>
<dbReference type="GeneCards" id="PARD3B"/>
<dbReference type="HGNC" id="HGNC:14446">
    <property type="gene designation" value="PARD3B"/>
</dbReference>
<dbReference type="HPA" id="ENSG00000116117">
    <property type="expression patterns" value="Low tissue specificity"/>
</dbReference>
<dbReference type="MIM" id="619353">
    <property type="type" value="gene"/>
</dbReference>
<dbReference type="neXtProt" id="NX_Q8TEW8"/>
<dbReference type="OpenTargets" id="ENSG00000116117"/>
<dbReference type="PharmGKB" id="PA162398721"/>
<dbReference type="VEuPathDB" id="HostDB:ENSG00000116117"/>
<dbReference type="eggNOG" id="KOG3528">
    <property type="taxonomic scope" value="Eukaryota"/>
</dbReference>
<dbReference type="GeneTree" id="ENSGT00950000183214"/>
<dbReference type="HOGENOM" id="CLU_2605385_0_0_1"/>
<dbReference type="InParanoid" id="Q8TEW8"/>
<dbReference type="OMA" id="QFQHIKA"/>
<dbReference type="OrthoDB" id="6264899at2759"/>
<dbReference type="PAN-GO" id="Q8TEW8">
    <property type="GO annotations" value="11 GO annotations based on evolutionary models"/>
</dbReference>
<dbReference type="PhylomeDB" id="Q8TEW8"/>
<dbReference type="TreeFam" id="TF323729"/>
<dbReference type="PathwayCommons" id="Q8TEW8"/>
<dbReference type="SignaLink" id="Q8TEW8"/>
<dbReference type="BioGRID-ORCS" id="117583">
    <property type="hits" value="9 hits in 1155 CRISPR screens"/>
</dbReference>
<dbReference type="ChiTaRS" id="PARD3B">
    <property type="organism name" value="human"/>
</dbReference>
<dbReference type="GeneWiki" id="PARD3B"/>
<dbReference type="GenomeRNAi" id="117583"/>
<dbReference type="Pharos" id="Q8TEW8">
    <property type="development level" value="Tbio"/>
</dbReference>
<dbReference type="PRO" id="PR:Q8TEW8"/>
<dbReference type="Proteomes" id="UP000005640">
    <property type="component" value="Chromosome 2"/>
</dbReference>
<dbReference type="RNAct" id="Q8TEW8">
    <property type="molecule type" value="protein"/>
</dbReference>
<dbReference type="Bgee" id="ENSG00000116117">
    <property type="expression patterns" value="Expressed in sural nerve and 149 other cell types or tissues"/>
</dbReference>
<dbReference type="ExpressionAtlas" id="Q8TEW8">
    <property type="expression patterns" value="baseline and differential"/>
</dbReference>
<dbReference type="GO" id="GO:0005912">
    <property type="term" value="C:adherens junction"/>
    <property type="evidence" value="ECO:0000318"/>
    <property type="project" value="GO_Central"/>
</dbReference>
<dbReference type="GO" id="GO:0043296">
    <property type="term" value="C:apical junction complex"/>
    <property type="evidence" value="ECO:0000318"/>
    <property type="project" value="GO_Central"/>
</dbReference>
<dbReference type="GO" id="GO:0016324">
    <property type="term" value="C:apical plasma membrane"/>
    <property type="evidence" value="ECO:0000318"/>
    <property type="project" value="GO_Central"/>
</dbReference>
<dbReference type="GO" id="GO:0005923">
    <property type="term" value="C:bicellular tight junction"/>
    <property type="evidence" value="ECO:0007669"/>
    <property type="project" value="UniProtKB-SubCell"/>
</dbReference>
<dbReference type="GO" id="GO:0005938">
    <property type="term" value="C:cell cortex"/>
    <property type="evidence" value="ECO:0000318"/>
    <property type="project" value="GO_Central"/>
</dbReference>
<dbReference type="GO" id="GO:0030054">
    <property type="term" value="C:cell junction"/>
    <property type="evidence" value="ECO:0000314"/>
    <property type="project" value="HPA"/>
</dbReference>
<dbReference type="GO" id="GO:0012505">
    <property type="term" value="C:endomembrane system"/>
    <property type="evidence" value="ECO:0007669"/>
    <property type="project" value="UniProtKB-SubCell"/>
</dbReference>
<dbReference type="GO" id="GO:0032991">
    <property type="term" value="C:protein-containing complex"/>
    <property type="evidence" value="ECO:0000314"/>
    <property type="project" value="UniProtKB"/>
</dbReference>
<dbReference type="GO" id="GO:0035091">
    <property type="term" value="F:phosphatidylinositol binding"/>
    <property type="evidence" value="ECO:0000318"/>
    <property type="project" value="GO_Central"/>
</dbReference>
<dbReference type="GO" id="GO:0007155">
    <property type="term" value="P:cell adhesion"/>
    <property type="evidence" value="ECO:0000318"/>
    <property type="project" value="GO_Central"/>
</dbReference>
<dbReference type="GO" id="GO:0051301">
    <property type="term" value="P:cell division"/>
    <property type="evidence" value="ECO:0007669"/>
    <property type="project" value="UniProtKB-KW"/>
</dbReference>
<dbReference type="GO" id="GO:0030010">
    <property type="term" value="P:establishment of cell polarity"/>
    <property type="evidence" value="ECO:0000318"/>
    <property type="project" value="GO_Central"/>
</dbReference>
<dbReference type="GO" id="GO:0051660">
    <property type="term" value="P:establishment of centrosome localization"/>
    <property type="evidence" value="ECO:0000318"/>
    <property type="project" value="GO_Central"/>
</dbReference>
<dbReference type="GO" id="GO:0045197">
    <property type="term" value="P:establishment or maintenance of epithelial cell apical/basal polarity"/>
    <property type="evidence" value="ECO:0000318"/>
    <property type="project" value="GO_Central"/>
</dbReference>
<dbReference type="GO" id="GO:0000226">
    <property type="term" value="P:microtubule cytoskeleton organization"/>
    <property type="evidence" value="ECO:0000318"/>
    <property type="project" value="GO_Central"/>
</dbReference>
<dbReference type="GO" id="GO:0008104">
    <property type="term" value="P:protein localization"/>
    <property type="evidence" value="ECO:0000318"/>
    <property type="project" value="GO_Central"/>
</dbReference>
<dbReference type="CDD" id="cd06691">
    <property type="entry name" value="PDZ1_Par3-like"/>
    <property type="match status" value="1"/>
</dbReference>
<dbReference type="CDD" id="cd23058">
    <property type="entry name" value="PDZ2_Par3-like"/>
    <property type="match status" value="1"/>
</dbReference>
<dbReference type="CDD" id="cd23059">
    <property type="entry name" value="PDZ3_Par3-like"/>
    <property type="match status" value="1"/>
</dbReference>
<dbReference type="FunFam" id="2.30.42.10:FF:000078">
    <property type="entry name" value="Partitioning defective 3 homolog B"/>
    <property type="match status" value="1"/>
</dbReference>
<dbReference type="FunFam" id="2.30.42.10:FF:000117">
    <property type="entry name" value="partitioning defective 3 homolog B isoform X2"/>
    <property type="match status" value="1"/>
</dbReference>
<dbReference type="FunFam" id="2.30.42.10:FF:000011">
    <property type="entry name" value="partitioning defective 3 homolog isoform X1"/>
    <property type="match status" value="1"/>
</dbReference>
<dbReference type="FunFam" id="3.10.20.90:FF:000017">
    <property type="entry name" value="partitioning defective 3 homolog isoform X2"/>
    <property type="match status" value="1"/>
</dbReference>
<dbReference type="Gene3D" id="2.30.42.10">
    <property type="match status" value="3"/>
</dbReference>
<dbReference type="Gene3D" id="3.10.20.90">
    <property type="entry name" value="Phosphatidylinositol 3-kinase Catalytic Subunit, Chain A, domain 1"/>
    <property type="match status" value="1"/>
</dbReference>
<dbReference type="InterPro" id="IPR052213">
    <property type="entry name" value="PAR3"/>
</dbReference>
<dbReference type="InterPro" id="IPR021922">
    <property type="entry name" value="Par3/HAL_N"/>
</dbReference>
<dbReference type="InterPro" id="IPR001478">
    <property type="entry name" value="PDZ"/>
</dbReference>
<dbReference type="InterPro" id="IPR036034">
    <property type="entry name" value="PDZ_sf"/>
</dbReference>
<dbReference type="PANTHER" id="PTHR16484:SF4">
    <property type="entry name" value="PARTITIONING DEFECTIVE 3 HOMOLOG B"/>
    <property type="match status" value="1"/>
</dbReference>
<dbReference type="PANTHER" id="PTHR16484">
    <property type="entry name" value="PARTITIONING DEFECTIVE 3 RELATED"/>
    <property type="match status" value="1"/>
</dbReference>
<dbReference type="Pfam" id="PF12053">
    <property type="entry name" value="Par3_HAL_N_term"/>
    <property type="match status" value="1"/>
</dbReference>
<dbReference type="Pfam" id="PF00595">
    <property type="entry name" value="PDZ"/>
    <property type="match status" value="2"/>
</dbReference>
<dbReference type="SMART" id="SM00228">
    <property type="entry name" value="PDZ"/>
    <property type="match status" value="3"/>
</dbReference>
<dbReference type="SUPFAM" id="SSF50156">
    <property type="entry name" value="PDZ domain-like"/>
    <property type="match status" value="3"/>
</dbReference>
<dbReference type="PROSITE" id="PS50106">
    <property type="entry name" value="PDZ"/>
    <property type="match status" value="3"/>
</dbReference>
<accession>Q8TEW8</accession>
<accession>E9PE87</accession>
<accession>Q8IUC7</accession>
<accession>Q8IUC9</accession>
<accession>Q96DK9</accession>
<accession>Q96N09</accession>
<accession>Q96NX6</accession>
<accession>Q96NX7</accession>
<accession>Q96Q29</accession>
<sequence length="1205" mass="132494">MKVTVCFGRTGIVVPCKEGQLRVGELTQQALQRYLKTREKGPGYWVKIHHLEYTDGGILDPDDVLADVVEDKDKLIAVFEEQEPLHKIESPSGNPADRQSPDAFETEVAAQLAAFKPIGGEIEVTPSALKLGTPLLVRRSSDPVPGPPADTQPSASHPGGQSLKLVVPDSTQNLEDREVLNGVQTELLTSPRTKDTLSDMTRTVEISGEGGPLGIHVVPFFSSLSGRILGLFIRGIEDNSRSKREGLFHENECIVKINNVDLVDKTFAQAQDVFRQAMKSPSVLLHVLPPQNREQYEKSVIGSLNIFGNNDGVLKTKVPPPVHGKSGLKTANLTGTDSPETDASASLQQNKSPRVPRLGGKPSSPSLSPLMGFGSNKNAKKIKIDLKKGPEGLGFTVVTRDSSIHGPGPIFVKNILPKGAAIKDGRLQSGDRILEVNGRDVTGRTQEELVAMLRSTKQGETASLVIARQEGHFLPRELKGEPDCCALSLETSEQLTFEIPLNDSGSAGLGVSLKGNKSRETGTDLGIFIKSIIHGGAAFKDGRLRMNDQLIAVNGESLLGKSNHEAMETLRRSMSMEGNIRGMIQLVILRRPERPMEDPAECGAFSKPCFENCQNAVTTSRRNDNSILHPLGTCSPQDKQKGLLLPNDGWAESEVPPSPTPHSALGLGLEDYSHSSGVDSAVYFPDQHINFRSVTPARQPESINLKASKSMDLVPDESKVHSLAGQKSESPSKDFGPTLGLKKSSSLESLQTAVAEVRKNDLPFHRPRPHMVRGRGCNESFRAAIDKSYDGPEEIEADGLSDKSSHSGQGALNCESAPQGNSELEDMENKARKVKKTKEKEKKKEKGKLKVKEKKRKEENEDPERKIKKKGFGAMLRFGKKKEDKGGKAEQKGTLKHGGLREEELEKMKEERERIGAKHQELREKQARGLLDYATGAIGSVYDMDDDEMDPNYARVNHFREPCTSANVFRSPSPPRAGPFGYPRDGHPLSPERDHLEGLYAKVNKPYHPLVPADSGRPTGGSTDRIQKLRKEYYQARREGFPLYEDDEGRARPSEYDLLWVPGRGPDGNAHNLRFEGMERQYASLPRGGPADPVDYLPAAPRGLYKERELPYYPGAHPMHPPKGSYPRPTELRVADLRYPQHYPPPPAPQHKGPFRQDVPPSPPQHQRMPAYQETGRPGPRGGSPDQYPYRTQDSRQKNPMTAAV</sequence>
<protein>
    <recommendedName>
        <fullName>Partitioning defective 3 homolog B</fullName>
    </recommendedName>
    <alternativeName>
        <fullName>Amyotrophic lateral sclerosis 2 chromosomal region candidate gene 19 protein</fullName>
    </alternativeName>
    <alternativeName>
        <fullName>PAR3-beta</fullName>
    </alternativeName>
    <alternativeName>
        <fullName>Partitioning defective 3-like protein</fullName>
        <shortName>PAR3-L protein</shortName>
    </alternativeName>
</protein>
<organism>
    <name type="scientific">Homo sapiens</name>
    <name type="common">Human</name>
    <dbReference type="NCBI Taxonomy" id="9606"/>
    <lineage>
        <taxon>Eukaryota</taxon>
        <taxon>Metazoa</taxon>
        <taxon>Chordata</taxon>
        <taxon>Craniata</taxon>
        <taxon>Vertebrata</taxon>
        <taxon>Euteleostomi</taxon>
        <taxon>Mammalia</taxon>
        <taxon>Eutheria</taxon>
        <taxon>Euarchontoglires</taxon>
        <taxon>Primates</taxon>
        <taxon>Haplorrhini</taxon>
        <taxon>Catarrhini</taxon>
        <taxon>Hominidae</taxon>
        <taxon>Homo</taxon>
    </lineage>
</organism>
<feature type="chain" id="PRO_0000185072" description="Partitioning defective 3 homolog B">
    <location>
        <begin position="1"/>
        <end position="1205"/>
    </location>
</feature>
<feature type="domain" description="PDZ 1" evidence="2">
    <location>
        <begin position="201"/>
        <end position="289"/>
    </location>
</feature>
<feature type="domain" description="PDZ 2" evidence="2">
    <location>
        <begin position="383"/>
        <end position="468"/>
    </location>
</feature>
<feature type="domain" description="PDZ 3" evidence="2">
    <location>
        <begin position="498"/>
        <end position="585"/>
    </location>
</feature>
<feature type="region of interest" description="Disordered" evidence="3">
    <location>
        <begin position="83"/>
        <end position="104"/>
    </location>
</feature>
<feature type="region of interest" description="Disordered" evidence="3">
    <location>
        <begin position="137"/>
        <end position="165"/>
    </location>
</feature>
<feature type="region of interest" description="Disordered" evidence="3">
    <location>
        <begin position="318"/>
        <end position="374"/>
    </location>
</feature>
<feature type="region of interest" description="Disordered" evidence="3">
    <location>
        <begin position="707"/>
        <end position="743"/>
    </location>
</feature>
<feature type="region of interest" description="Disordered" evidence="3">
    <location>
        <begin position="784"/>
        <end position="921"/>
    </location>
</feature>
<feature type="region of interest" description="Disordered" evidence="3">
    <location>
        <begin position="1111"/>
        <end position="1205"/>
    </location>
</feature>
<feature type="compositionally biased region" description="Polar residues" evidence="3">
    <location>
        <begin position="329"/>
        <end position="352"/>
    </location>
</feature>
<feature type="compositionally biased region" description="Low complexity" evidence="3">
    <location>
        <begin position="356"/>
        <end position="374"/>
    </location>
</feature>
<feature type="compositionally biased region" description="Polar residues" evidence="3">
    <location>
        <begin position="806"/>
        <end position="822"/>
    </location>
</feature>
<feature type="compositionally biased region" description="Basic and acidic residues" evidence="3">
    <location>
        <begin position="838"/>
        <end position="865"/>
    </location>
</feature>
<feature type="compositionally biased region" description="Basic and acidic residues" evidence="3">
    <location>
        <begin position="881"/>
        <end position="921"/>
    </location>
</feature>
<feature type="modified residue" description="Phosphoserine" evidence="14">
    <location>
        <position position="100"/>
    </location>
</feature>
<feature type="modified residue" description="Phosphoserine" evidence="1">
    <location>
        <position position="346"/>
    </location>
</feature>
<feature type="modified residue" description="Phosphoserine" evidence="13">
    <location>
        <position position="352"/>
    </location>
</feature>
<feature type="modified residue" description="Phosphoserine" evidence="13">
    <location>
        <position position="368"/>
    </location>
</feature>
<feature type="modified residue" description="Phosphoserine" evidence="1">
    <location>
        <position position="635"/>
    </location>
</feature>
<feature type="modified residue" description="Phosphoserine" evidence="1">
    <location>
        <position position="710"/>
    </location>
</feature>
<feature type="modified residue" description="Phosphoserine" evidence="1">
    <location>
        <position position="728"/>
    </location>
</feature>
<feature type="modified residue" description="Phosphoserine" evidence="1">
    <location>
        <position position="730"/>
    </location>
</feature>
<feature type="modified residue" description="Phosphoserine" evidence="12 13">
    <location>
        <position position="746"/>
    </location>
</feature>
<feature type="modified residue" description="Phosphoserine" evidence="1">
    <location>
        <position position="749"/>
    </location>
</feature>
<feature type="modified residue" description="Phosphoserine" evidence="12">
    <location>
        <position position="801"/>
    </location>
</feature>
<feature type="modified residue" description="Phosphoserine" evidence="14">
    <location>
        <position position="1184"/>
    </location>
</feature>
<feature type="splice variant" id="VSP_007476" description="In isoform 4." evidence="8">
    <original>GPGYWVKIHHLEYTDGGILDPDDVLADVVEDKDKLIAVF</original>
    <variation>VSAARRSGARLQPRHLPGSWLLGEDSSLRIYRWRNPGSR</variation>
    <location>
        <begin position="41"/>
        <end position="79"/>
    </location>
</feature>
<feature type="splice variant" id="VSP_007477" description="In isoform 4." evidence="8">
    <location>
        <begin position="80"/>
        <end position="1205"/>
    </location>
</feature>
<feature type="splice variant" id="VSP_007478" description="In isoform 2." evidence="9">
    <location>
        <begin position="479"/>
        <end position="540"/>
    </location>
</feature>
<feature type="splice variant" id="VSP_054048" description="In isoform 6." evidence="11">
    <location>
        <begin position="729"/>
        <end position="797"/>
    </location>
</feature>
<feature type="splice variant" id="VSP_007479" description="In isoform 3." evidence="9">
    <location>
        <begin position="730"/>
        <end position="798"/>
    </location>
</feature>
<feature type="splice variant" id="VSP_007543" description="In isoform 5." evidence="10">
    <location>
        <begin position="914"/>
        <end position="1014"/>
    </location>
</feature>
<feature type="sequence variant" id="VAR_015664" description="In dbSNP:rs1510765." evidence="5 6">
    <original>L</original>
    <variation>P</variation>
    <location>
        <position position="165"/>
    </location>
</feature>
<feature type="sequence variant" id="VAR_015665" description="In dbSNP:rs2289025." evidence="6">
    <original>R</original>
    <variation>K</variation>
    <location>
        <position position="192"/>
    </location>
</feature>
<feature type="sequence variant" id="VAR_015666" description="In dbSNP:rs1061522.">
    <original>Q</original>
    <variation>K</variation>
    <location>
        <position position="295"/>
    </location>
</feature>
<feature type="sequence variant" id="VAR_056642" description="In dbSNP:rs34751010.">
    <original>K</original>
    <variation>R</variation>
    <location>
        <position position="317"/>
    </location>
</feature>
<feature type="sequence conflict" description="In Ref. 5; BAB71623." evidence="11" ref="5">
    <original>GTLKHGGLR</original>
    <variation>WLINFVLIW</variation>
    <location>
        <begin position="893"/>
        <end position="901"/>
    </location>
</feature>
<evidence type="ECO:0000250" key="1">
    <source>
        <dbReference type="UniProtKB" id="Q9CSB4"/>
    </source>
</evidence>
<evidence type="ECO:0000255" key="2">
    <source>
        <dbReference type="PROSITE-ProRule" id="PRU00143"/>
    </source>
</evidence>
<evidence type="ECO:0000256" key="3">
    <source>
        <dbReference type="SAM" id="MobiDB-lite"/>
    </source>
</evidence>
<evidence type="ECO:0000269" key="4">
    <source>
    </source>
</evidence>
<evidence type="ECO:0000269" key="5">
    <source>
    </source>
</evidence>
<evidence type="ECO:0000269" key="6">
    <source>
    </source>
</evidence>
<evidence type="ECO:0000269" key="7">
    <source>
    </source>
</evidence>
<evidence type="ECO:0000303" key="8">
    <source>
    </source>
</evidence>
<evidence type="ECO:0000303" key="9">
    <source>
    </source>
</evidence>
<evidence type="ECO:0000303" key="10">
    <source>
    </source>
</evidence>
<evidence type="ECO:0000305" key="11"/>
<evidence type="ECO:0007744" key="12">
    <source>
    </source>
</evidence>
<evidence type="ECO:0007744" key="13">
    <source>
    </source>
</evidence>
<evidence type="ECO:0007744" key="14">
    <source>
    </source>
</evidence>
<gene>
    <name type="primary">PARD3B</name>
    <name type="synonym">ALS2CR19</name>
    <name type="synonym">PAR3B</name>
    <name type="synonym">PAR3L</name>
</gene>
<proteinExistence type="evidence at protein level"/>
<comment type="function">
    <text>Putative adapter protein involved in asymmetrical cell division and cell polarization processes. May play a role in the formation of epithelial tight junctions.</text>
</comment>
<comment type="subunit">
    <text evidence="4 7">Interacts with PARD6B. Interacts with INSC/inscuteable.</text>
</comment>
<comment type="subcellular location">
    <subcellularLocation>
        <location>Endomembrane system</location>
    </subcellularLocation>
    <subcellularLocation>
        <location>Cell junction</location>
    </subcellularLocation>
    <subcellularLocation>
        <location>Cell junction</location>
        <location>Tight junction</location>
    </subcellularLocation>
    <text>Partially localized along the cell-cell contact region. Colocalizes with TJP1 to epithelial tight junctions.</text>
</comment>
<comment type="alternative products">
    <event type="alternative splicing"/>
    <isoform>
        <id>Q8TEW8-1</id>
        <name>1</name>
        <name>Par3La</name>
        <name>a</name>
        <sequence type="displayed"/>
    </isoform>
    <isoform>
        <id>Q8TEW8-2</id>
        <name>2</name>
        <name>Par3Lb</name>
        <name>b</name>
        <sequence type="described" ref="VSP_007478"/>
    </isoform>
    <isoform>
        <id>Q8TEW8-3</id>
        <name>3</name>
        <name>Par3Lc</name>
        <name>c</name>
        <sequence type="described" ref="VSP_007479"/>
    </isoform>
    <isoform>
        <id>Q8TEW8-4</id>
        <name>4</name>
        <sequence type="described" ref="VSP_007476 VSP_007477"/>
    </isoform>
    <isoform>
        <id>Q8TEW8-5</id>
        <name>5</name>
        <sequence type="described" ref="VSP_007543"/>
    </isoform>
    <isoform>
        <id>Q8TEW8-6</id>
        <name>6</name>
        <sequence type="described" ref="VSP_054048"/>
    </isoform>
</comment>
<comment type="tissue specificity">
    <text>Highly expressed in kidney, lung and skeletal muscle. Expressed at intermediate levels in brain, heart, placenta, liver and pancreas. Isoform 1 is predominant, while isoform 2 and isoform 3 are expressed at lower levels.</text>
</comment>
<comment type="domain">
    <text>The N-terminal part (1-351) part blocks the association of the tight junction marker TJP1 with the cell-cell boundary when it is overexpressed.</text>
</comment>
<comment type="similarity">
    <text evidence="11">Belongs to the PAR3 family.</text>
</comment>
<comment type="sequence caution" evidence="11">
    <conflict type="frameshift">
        <sequence resource="EMBL-CDS" id="BAB71106"/>
    </conflict>
</comment>
<comment type="sequence caution" evidence="11">
    <conflict type="erroneous initiation">
        <sequence resource="EMBL-CDS" id="BAB71623"/>
    </conflict>
</comment>